<organism>
    <name type="scientific">Drosophila erecta</name>
    <name type="common">Fruit fly</name>
    <dbReference type="NCBI Taxonomy" id="7220"/>
    <lineage>
        <taxon>Eukaryota</taxon>
        <taxon>Metazoa</taxon>
        <taxon>Ecdysozoa</taxon>
        <taxon>Arthropoda</taxon>
        <taxon>Hexapoda</taxon>
        <taxon>Insecta</taxon>
        <taxon>Pterygota</taxon>
        <taxon>Neoptera</taxon>
        <taxon>Endopterygota</taxon>
        <taxon>Diptera</taxon>
        <taxon>Brachycera</taxon>
        <taxon>Muscomorpha</taxon>
        <taxon>Ephydroidea</taxon>
        <taxon>Drosophilidae</taxon>
        <taxon>Drosophila</taxon>
        <taxon>Sophophora</taxon>
    </lineage>
</organism>
<name>DDRGK_DROER</name>
<keyword id="KW-0256">Endoplasmic reticulum</keyword>
<keyword id="KW-0472">Membrane</keyword>
<keyword id="KW-0812">Transmembrane</keyword>
<keyword id="KW-1133">Transmembrane helix</keyword>
<keyword id="KW-0833">Ubl conjugation pathway</keyword>
<protein>
    <recommendedName>
        <fullName>DDRGK domain-containing protein 1</fullName>
    </recommendedName>
</protein>
<reference key="1">
    <citation type="journal article" date="2007" name="Nature">
        <title>Evolution of genes and genomes on the Drosophila phylogeny.</title>
        <authorList>
            <consortium name="Drosophila 12 genomes consortium"/>
        </authorList>
    </citation>
    <scope>NUCLEOTIDE SEQUENCE [LARGE SCALE GENOMIC DNA]</scope>
    <source>
        <strain>Tucson 14021-0224.01</strain>
    </source>
</reference>
<accession>B3P045</accession>
<sequence>MELIILVGIAIALLVVIITLYLLQKKNAAPETKPAAAPQRGVPQRAQEGVPRRAQIARNQRNRLRQNAPAAPAGQVAPAAGAPAARGDSDHEDEGQVDADDARVPQGAVLDEKMGAKKRAKMEAKEQKRLQREQELHDREQRKVKEAKEEAERKQQEDLEAEVERKRVEAERLAKEERERKEHEEYLKMKAAFSVEEEGFEEGDADEQDSLLAGFIQYIRDNKVVVLEDLAVAFKLKTQQVIDRIQELQADGTLTGVIDDRGKFIYVSEEELSAVAKFIKQRGRVSITELAESSNNLINLTPISAGGEEASS</sequence>
<proteinExistence type="inferred from homology"/>
<feature type="chain" id="PRO_0000391858" description="DDRGK domain-containing protein 1">
    <location>
        <begin position="1"/>
        <end position="312"/>
    </location>
</feature>
<feature type="topological domain" description="Lumenal" evidence="5">
    <location>
        <begin position="1"/>
        <end position="2"/>
    </location>
</feature>
<feature type="transmembrane region" description="Helical" evidence="3">
    <location>
        <begin position="3"/>
        <end position="23"/>
    </location>
</feature>
<feature type="topological domain" description="Cytoplasmic" evidence="5">
    <location>
        <begin position="24"/>
        <end position="312"/>
    </location>
</feature>
<feature type="region of interest" description="Disordered" evidence="4">
    <location>
        <begin position="30"/>
        <end position="163"/>
    </location>
</feature>
<feature type="compositionally biased region" description="Low complexity" evidence="4">
    <location>
        <begin position="52"/>
        <end position="85"/>
    </location>
</feature>
<feature type="compositionally biased region" description="Acidic residues" evidence="4">
    <location>
        <begin position="90"/>
        <end position="99"/>
    </location>
</feature>
<feature type="compositionally biased region" description="Basic and acidic residues" evidence="4">
    <location>
        <begin position="110"/>
        <end position="163"/>
    </location>
</feature>
<gene>
    <name evidence="2" type="primary">Ddrgk1</name>
    <name type="ORF">GG24454</name>
</gene>
<dbReference type="EMBL" id="CH954181">
    <property type="protein sequence ID" value="EDV48281.1"/>
    <property type="molecule type" value="Genomic_DNA"/>
</dbReference>
<dbReference type="SMR" id="B3P045"/>
<dbReference type="EnsemblMetazoa" id="FBtr0144508">
    <property type="protein sequence ID" value="FBpp0143000"/>
    <property type="gene ID" value="FBgn0116586"/>
</dbReference>
<dbReference type="EnsemblMetazoa" id="XM_001979287.3">
    <property type="protein sequence ID" value="XP_001979323.1"/>
    <property type="gene ID" value="LOC6553540"/>
</dbReference>
<dbReference type="GeneID" id="6553540"/>
<dbReference type="KEGG" id="der:6553540"/>
<dbReference type="CTD" id="65992"/>
<dbReference type="eggNOG" id="KOG3054">
    <property type="taxonomic scope" value="Eukaryota"/>
</dbReference>
<dbReference type="HOGENOM" id="CLU_059562_1_0_1"/>
<dbReference type="OMA" id="VEHGNKV"/>
<dbReference type="OrthoDB" id="2285710at2759"/>
<dbReference type="PhylomeDB" id="B3P045"/>
<dbReference type="Proteomes" id="UP000008711">
    <property type="component" value="Unassembled WGS sequence"/>
</dbReference>
<dbReference type="GO" id="GO:0005789">
    <property type="term" value="C:endoplasmic reticulum membrane"/>
    <property type="evidence" value="ECO:0007669"/>
    <property type="project" value="UniProtKB-SubCell"/>
</dbReference>
<dbReference type="GO" id="GO:0044389">
    <property type="term" value="F:ubiquitin-like protein ligase binding"/>
    <property type="evidence" value="ECO:0007669"/>
    <property type="project" value="TreeGrafter"/>
</dbReference>
<dbReference type="GO" id="GO:0071569">
    <property type="term" value="P:protein ufmylation"/>
    <property type="evidence" value="ECO:0007669"/>
    <property type="project" value="EnsemblMetazoa"/>
</dbReference>
<dbReference type="FunFam" id="1.10.10.10:FF:000143">
    <property type="entry name" value="DDRGK domain-containing protein 1"/>
    <property type="match status" value="1"/>
</dbReference>
<dbReference type="Gene3D" id="1.10.10.10">
    <property type="entry name" value="Winged helix-like DNA-binding domain superfamily/Winged helix DNA-binding domain"/>
    <property type="match status" value="1"/>
</dbReference>
<dbReference type="InterPro" id="IPR019153">
    <property type="entry name" value="DDRGK_dom-contain"/>
</dbReference>
<dbReference type="InterPro" id="IPR050899">
    <property type="entry name" value="DDRGK_domain-containing"/>
</dbReference>
<dbReference type="InterPro" id="IPR036388">
    <property type="entry name" value="WH-like_DNA-bd_sf"/>
</dbReference>
<dbReference type="InterPro" id="IPR036390">
    <property type="entry name" value="WH_DNA-bd_sf"/>
</dbReference>
<dbReference type="PANTHER" id="PTHR48176">
    <property type="entry name" value="DDRGK DOMAIN-CONTAINING PROTEIN 1"/>
    <property type="match status" value="1"/>
</dbReference>
<dbReference type="PANTHER" id="PTHR48176:SF1">
    <property type="entry name" value="DDRGK DOMAIN-CONTAINING PROTEIN 1"/>
    <property type="match status" value="1"/>
</dbReference>
<dbReference type="Pfam" id="PF09756">
    <property type="entry name" value="DDRGK"/>
    <property type="match status" value="1"/>
</dbReference>
<dbReference type="SMART" id="SM01128">
    <property type="entry name" value="DDRGK"/>
    <property type="match status" value="1"/>
</dbReference>
<dbReference type="SUPFAM" id="SSF46785">
    <property type="entry name" value="Winged helix' DNA-binding domain"/>
    <property type="match status" value="1"/>
</dbReference>
<comment type="function">
    <text evidence="1 2">Substrate adapter for ufmylation, the covalent attachment of the ubiquitin-like modifier UFM1 to substrate proteins (By similarity). Required for ufmylation of Atg9; protects the nervous system during aging, possibly by stabilizing Atg9 and supporting its function (By similarity).</text>
</comment>
<comment type="subunit">
    <text evidence="2">Interacts with Atg9; the interaction is transient.</text>
</comment>
<comment type="subcellular location">
    <subcellularLocation>
        <location evidence="1">Endoplasmic reticulum membrane</location>
        <topology evidence="3">Single-pass membrane protein</topology>
    </subcellularLocation>
</comment>
<comment type="similarity">
    <text evidence="5">Belongs to the DDRGK1 family.</text>
</comment>
<evidence type="ECO:0000250" key="1">
    <source>
        <dbReference type="UniProtKB" id="Q96HY6"/>
    </source>
</evidence>
<evidence type="ECO:0000250" key="2">
    <source>
        <dbReference type="UniProtKB" id="Q9VDD1"/>
    </source>
</evidence>
<evidence type="ECO:0000255" key="3"/>
<evidence type="ECO:0000256" key="4">
    <source>
        <dbReference type="SAM" id="MobiDB-lite"/>
    </source>
</evidence>
<evidence type="ECO:0000305" key="5"/>